<evidence type="ECO:0000255" key="1">
    <source>
        <dbReference type="HAMAP-Rule" id="MF_01395"/>
    </source>
</evidence>
<evidence type="ECO:0000255" key="2">
    <source>
        <dbReference type="PROSITE-ProRule" id="PRU01136"/>
    </source>
</evidence>
<sequence length="294" mass="32302">MSWLEKIFNTSNIVSSRKASIPEGVWTKCTSCEQVLYSAELERNLEVCPKCDHHMRMKARKRLETFLDAEGRVEIGAELEPKDVLKFKDSKRYKDRISAAQKSSDETDALVVMKGTLLELPVVACAFEFSFMGGSMGSVVGARFVKAVDAAIENNCPLVCFSASGGARMQEALMSLMQMAKTSAALARLSRKGLPFFSVLTDPTMGGVSASLAMLGDINIGEPKALIGFAGRRVIEQTVREDLPEGFQRSEFLLEHGAIDMIVDRREMRQRIGGLMAKMTNQESPLVVPVDGSH</sequence>
<name>ACCD_ALIFM</name>
<keyword id="KW-0067">ATP-binding</keyword>
<keyword id="KW-0963">Cytoplasm</keyword>
<keyword id="KW-0275">Fatty acid biosynthesis</keyword>
<keyword id="KW-0276">Fatty acid metabolism</keyword>
<keyword id="KW-0444">Lipid biosynthesis</keyword>
<keyword id="KW-0443">Lipid metabolism</keyword>
<keyword id="KW-0479">Metal-binding</keyword>
<keyword id="KW-0547">Nucleotide-binding</keyword>
<keyword id="KW-0808">Transferase</keyword>
<keyword id="KW-0862">Zinc</keyword>
<keyword id="KW-0863">Zinc-finger</keyword>
<organism>
    <name type="scientific">Aliivibrio fischeri (strain MJ11)</name>
    <name type="common">Vibrio fischeri</name>
    <dbReference type="NCBI Taxonomy" id="388396"/>
    <lineage>
        <taxon>Bacteria</taxon>
        <taxon>Pseudomonadati</taxon>
        <taxon>Pseudomonadota</taxon>
        <taxon>Gammaproteobacteria</taxon>
        <taxon>Vibrionales</taxon>
        <taxon>Vibrionaceae</taxon>
        <taxon>Aliivibrio</taxon>
    </lineage>
</organism>
<dbReference type="EC" id="2.1.3.15" evidence="1"/>
<dbReference type="EMBL" id="CP001139">
    <property type="protein sequence ID" value="ACH66861.1"/>
    <property type="molecule type" value="Genomic_DNA"/>
</dbReference>
<dbReference type="RefSeq" id="WP_005420025.1">
    <property type="nucleotide sequence ID" value="NC_011184.1"/>
</dbReference>
<dbReference type="SMR" id="B5FFN5"/>
<dbReference type="KEGG" id="vfm:VFMJ11_1820"/>
<dbReference type="HOGENOM" id="CLU_015486_1_0_6"/>
<dbReference type="UniPathway" id="UPA00655">
    <property type="reaction ID" value="UER00711"/>
</dbReference>
<dbReference type="Proteomes" id="UP000001857">
    <property type="component" value="Chromosome I"/>
</dbReference>
<dbReference type="GO" id="GO:0009329">
    <property type="term" value="C:acetate CoA-transferase complex"/>
    <property type="evidence" value="ECO:0007669"/>
    <property type="project" value="TreeGrafter"/>
</dbReference>
<dbReference type="GO" id="GO:0003989">
    <property type="term" value="F:acetyl-CoA carboxylase activity"/>
    <property type="evidence" value="ECO:0007669"/>
    <property type="project" value="InterPro"/>
</dbReference>
<dbReference type="GO" id="GO:0005524">
    <property type="term" value="F:ATP binding"/>
    <property type="evidence" value="ECO:0007669"/>
    <property type="project" value="UniProtKB-KW"/>
</dbReference>
<dbReference type="GO" id="GO:0016743">
    <property type="term" value="F:carboxyl- or carbamoyltransferase activity"/>
    <property type="evidence" value="ECO:0007669"/>
    <property type="project" value="UniProtKB-UniRule"/>
</dbReference>
<dbReference type="GO" id="GO:0008270">
    <property type="term" value="F:zinc ion binding"/>
    <property type="evidence" value="ECO:0007669"/>
    <property type="project" value="UniProtKB-UniRule"/>
</dbReference>
<dbReference type="GO" id="GO:0006633">
    <property type="term" value="P:fatty acid biosynthetic process"/>
    <property type="evidence" value="ECO:0007669"/>
    <property type="project" value="UniProtKB-KW"/>
</dbReference>
<dbReference type="GO" id="GO:2001295">
    <property type="term" value="P:malonyl-CoA biosynthetic process"/>
    <property type="evidence" value="ECO:0007669"/>
    <property type="project" value="UniProtKB-UniRule"/>
</dbReference>
<dbReference type="Gene3D" id="3.90.226.10">
    <property type="entry name" value="2-enoyl-CoA Hydratase, Chain A, domain 1"/>
    <property type="match status" value="1"/>
</dbReference>
<dbReference type="HAMAP" id="MF_01395">
    <property type="entry name" value="AcetylCoA_CT_beta"/>
    <property type="match status" value="1"/>
</dbReference>
<dbReference type="InterPro" id="IPR034733">
    <property type="entry name" value="AcCoA_carboxyl_beta"/>
</dbReference>
<dbReference type="InterPro" id="IPR000438">
    <property type="entry name" value="Acetyl_CoA_COase_Trfase_b_su"/>
</dbReference>
<dbReference type="InterPro" id="IPR029045">
    <property type="entry name" value="ClpP/crotonase-like_dom_sf"/>
</dbReference>
<dbReference type="InterPro" id="IPR011762">
    <property type="entry name" value="COA_CT_N"/>
</dbReference>
<dbReference type="InterPro" id="IPR041010">
    <property type="entry name" value="Znf-ACC"/>
</dbReference>
<dbReference type="NCBIfam" id="TIGR00515">
    <property type="entry name" value="accD"/>
    <property type="match status" value="1"/>
</dbReference>
<dbReference type="PANTHER" id="PTHR42995">
    <property type="entry name" value="ACETYL-COENZYME A CARBOXYLASE CARBOXYL TRANSFERASE SUBUNIT BETA, CHLOROPLASTIC"/>
    <property type="match status" value="1"/>
</dbReference>
<dbReference type="PANTHER" id="PTHR42995:SF5">
    <property type="entry name" value="ACETYL-COENZYME A CARBOXYLASE CARBOXYL TRANSFERASE SUBUNIT BETA, CHLOROPLASTIC"/>
    <property type="match status" value="1"/>
</dbReference>
<dbReference type="Pfam" id="PF01039">
    <property type="entry name" value="Carboxyl_trans"/>
    <property type="match status" value="1"/>
</dbReference>
<dbReference type="Pfam" id="PF17848">
    <property type="entry name" value="Zn_ribbon_ACC"/>
    <property type="match status" value="1"/>
</dbReference>
<dbReference type="PRINTS" id="PR01070">
    <property type="entry name" value="ACCCTRFRASEB"/>
</dbReference>
<dbReference type="SUPFAM" id="SSF52096">
    <property type="entry name" value="ClpP/crotonase"/>
    <property type="match status" value="1"/>
</dbReference>
<dbReference type="PROSITE" id="PS50980">
    <property type="entry name" value="COA_CT_NTER"/>
    <property type="match status" value="1"/>
</dbReference>
<proteinExistence type="inferred from homology"/>
<reference key="1">
    <citation type="submission" date="2008-08" db="EMBL/GenBank/DDBJ databases">
        <title>Complete sequence of Vibrio fischeri strain MJ11.</title>
        <authorList>
            <person name="Mandel M.J."/>
            <person name="Stabb E.V."/>
            <person name="Ruby E.G."/>
            <person name="Ferriera S."/>
            <person name="Johnson J."/>
            <person name="Kravitz S."/>
            <person name="Beeson K."/>
            <person name="Sutton G."/>
            <person name="Rogers Y.-H."/>
            <person name="Friedman R."/>
            <person name="Frazier M."/>
            <person name="Venter J.C."/>
        </authorList>
    </citation>
    <scope>NUCLEOTIDE SEQUENCE [LARGE SCALE GENOMIC DNA]</scope>
    <source>
        <strain>MJ11</strain>
    </source>
</reference>
<gene>
    <name evidence="1" type="primary">accD</name>
    <name type="ordered locus">VFMJ11_1820</name>
</gene>
<feature type="chain" id="PRO_0000359087" description="Acetyl-coenzyme A carboxylase carboxyl transferase subunit beta">
    <location>
        <begin position="1"/>
        <end position="294"/>
    </location>
</feature>
<feature type="domain" description="CoA carboxyltransferase N-terminal" evidence="2">
    <location>
        <begin position="25"/>
        <end position="294"/>
    </location>
</feature>
<feature type="zinc finger region" description="C4-type" evidence="1">
    <location>
        <begin position="29"/>
        <end position="51"/>
    </location>
</feature>
<feature type="binding site" evidence="1">
    <location>
        <position position="29"/>
    </location>
    <ligand>
        <name>Zn(2+)</name>
        <dbReference type="ChEBI" id="CHEBI:29105"/>
    </ligand>
</feature>
<feature type="binding site" evidence="1">
    <location>
        <position position="32"/>
    </location>
    <ligand>
        <name>Zn(2+)</name>
        <dbReference type="ChEBI" id="CHEBI:29105"/>
    </ligand>
</feature>
<feature type="binding site" evidence="1">
    <location>
        <position position="48"/>
    </location>
    <ligand>
        <name>Zn(2+)</name>
        <dbReference type="ChEBI" id="CHEBI:29105"/>
    </ligand>
</feature>
<feature type="binding site" evidence="1">
    <location>
        <position position="51"/>
    </location>
    <ligand>
        <name>Zn(2+)</name>
        <dbReference type="ChEBI" id="CHEBI:29105"/>
    </ligand>
</feature>
<accession>B5FFN5</accession>
<protein>
    <recommendedName>
        <fullName evidence="1">Acetyl-coenzyme A carboxylase carboxyl transferase subunit beta</fullName>
        <shortName evidence="1">ACCase subunit beta</shortName>
        <shortName evidence="1">Acetyl-CoA carboxylase carboxyltransferase subunit beta</shortName>
        <ecNumber evidence="1">2.1.3.15</ecNumber>
    </recommendedName>
</protein>
<comment type="function">
    <text evidence="1">Component of the acetyl coenzyme A carboxylase (ACC) complex. Biotin carboxylase (BC) catalyzes the carboxylation of biotin on its carrier protein (BCCP) and then the CO(2) group is transferred by the transcarboxylase to acetyl-CoA to form malonyl-CoA.</text>
</comment>
<comment type="catalytic activity">
    <reaction evidence="1">
        <text>N(6)-carboxybiotinyl-L-lysyl-[protein] + acetyl-CoA = N(6)-biotinyl-L-lysyl-[protein] + malonyl-CoA</text>
        <dbReference type="Rhea" id="RHEA:54728"/>
        <dbReference type="Rhea" id="RHEA-COMP:10505"/>
        <dbReference type="Rhea" id="RHEA-COMP:10506"/>
        <dbReference type="ChEBI" id="CHEBI:57288"/>
        <dbReference type="ChEBI" id="CHEBI:57384"/>
        <dbReference type="ChEBI" id="CHEBI:83144"/>
        <dbReference type="ChEBI" id="CHEBI:83145"/>
        <dbReference type="EC" id="2.1.3.15"/>
    </reaction>
</comment>
<comment type="cofactor">
    <cofactor evidence="1">
        <name>Zn(2+)</name>
        <dbReference type="ChEBI" id="CHEBI:29105"/>
    </cofactor>
    <text evidence="1">Binds 1 zinc ion per subunit.</text>
</comment>
<comment type="pathway">
    <text evidence="1">Lipid metabolism; malonyl-CoA biosynthesis; malonyl-CoA from acetyl-CoA: step 1/1.</text>
</comment>
<comment type="subunit">
    <text evidence="1">Acetyl-CoA carboxylase is a heterohexamer composed of biotin carboxyl carrier protein (AccB), biotin carboxylase (AccC) and two subunits each of ACCase subunit alpha (AccA) and ACCase subunit beta (AccD).</text>
</comment>
<comment type="subcellular location">
    <subcellularLocation>
        <location evidence="1">Cytoplasm</location>
    </subcellularLocation>
</comment>
<comment type="similarity">
    <text evidence="1">Belongs to the AccD/PCCB family.</text>
</comment>